<accession>Q7YRJ7</accession>
<name>SOX9_CANLF</name>
<reference key="1">
    <citation type="journal article" date="2003" name="Mol. Reprod. Dev.">
        <title>Sry and Sox9 expression during canine gonadal sex determination assayed by quantitative reverse transcription-polymerase chain reaction.</title>
        <authorList>
            <person name="Meyers-Wallen V.N."/>
        </authorList>
    </citation>
    <scope>NUCLEOTIDE SEQUENCE [MRNA]</scope>
</reference>
<sequence>MNLLDPFMKMTDEQEKGLSGAPSPTMSEDSAGSPCPSGSGSDTENTRPQENTFPKGEPDLKKESEEDKFPVCIREAVSQVLKGYDWTLVPMPVRVNGSSKNKPHVKRPMNAFMVWAQAARRKLADQYPHLHNAELSKTLGKLWRLLNESEKRPFVEEAERLRVQHKKDHPDYKYQPRRRKSVKNGQAEAEEATEQTHISPNAIFKRLQADSPHSSSGMNEVHSPGKHSGQSQGPPTPPTTPKTDVQPGKADLKREGRPLPEGGRQPPIDFRDVDIGELSSDVISNIETFDVNEFDQYLPPNGHPGVPATHGQVTYTGSYGISSTAATPAGAGHVWMSKQQAPPPPPPPPQQSPQAPPQPPQAPPQAPQAPPQPQPAPPQPQAAHTLTPLSSEPGQAQRTHIKTEQLSPSHYSEQQQHSPQQIAYSPFSLPHYSPSYPPITRSQYDYTDHQNSGSYYSHAAGQGSSLYSTFTYMNPAQRPMYTPIADTSGVPSIPQTHSPQHWEQPVYTQLTRP</sequence>
<protein>
    <recommendedName>
        <fullName evidence="5">Transcription factor SOX-9</fullName>
    </recommendedName>
</protein>
<keyword id="KW-0007">Acetylation</keyword>
<keyword id="KW-0010">Activator</keyword>
<keyword id="KW-0221">Differentiation</keyword>
<keyword id="KW-0238">DNA-binding</keyword>
<keyword id="KW-1017">Isopeptide bond</keyword>
<keyword id="KW-0539">Nucleus</keyword>
<keyword id="KW-0597">Phosphoprotein</keyword>
<keyword id="KW-1185">Reference proteome</keyword>
<keyword id="KW-0804">Transcription</keyword>
<keyword id="KW-0805">Transcription regulation</keyword>
<keyword id="KW-0832">Ubl conjugation</keyword>
<evidence type="ECO:0000250" key="1">
    <source>
        <dbReference type="UniProtKB" id="P48436"/>
    </source>
</evidence>
<evidence type="ECO:0000250" key="2">
    <source>
        <dbReference type="UniProtKB" id="Q04887"/>
    </source>
</evidence>
<evidence type="ECO:0000255" key="3">
    <source>
        <dbReference type="PROSITE-ProRule" id="PRU00267"/>
    </source>
</evidence>
<evidence type="ECO:0000256" key="4">
    <source>
        <dbReference type="SAM" id="MobiDB-lite"/>
    </source>
</evidence>
<evidence type="ECO:0000305" key="5"/>
<comment type="function">
    <text evidence="2">Transcription factor that plays a key role in chondrocytes differentiation and skeletal development. Specifically binds the 5'-ACAAAG-3' DNA motif present in enhancers and super-enhancers and promotes expression of genes important for chondrogenesis, including cartilage matrix protein-coding genes COL2A1, COL4A2, COL9A1, COL11A2 and ACAN, SOX5 and SOX6. Also binds to some promoter regions. Plays a central role in successive steps of chondrocyte differentiation. Absolutely required for precartilaginous condensation, the first step in chondrogenesis during which skeletal progenitors differentiate into prechondrocytes. Together with SOX5 and SOX6, required for overt chondrogenesis when condensed prechondrocytes differentiate into early stage chondrocytes, the second step in chondrogenesis. Later, required to direct hypertrophic maturation and block osteoblast differentiation of growth plate chondrocytes: maintains chondrocyte columnar proliferation, delays prehypertrophy and then prevents osteoblastic differentiation of chondrocytes by lowering beta-catenin (CTNNB1) signaling and RUNX2 expression. Also required for chondrocyte hypertrophy, both indirectly, by keeping the lineage fate of chondrocytes, and directly, by remaining present in upper hypertrophic cells and transactivating COL10A1 along with MEF2C. Low lipid levels are the main nutritional determinant for chondrogenic commitment of skeletal progenitor cells: when lipids levels are low, FOXO (FOXO1 and FOXO3) transcription factors promote expression of SOX9, which induces chondrogenic commitment and suppresses fatty acid oxidation. Mechanistically, helps, but is not required, to remove epigenetic signatures of transcriptional repression and deposit active promoter and enhancer marks at chondrocyte-specific genes. Acts in cooperation with the Hedgehog pathway-dependent GLI (GLI1 and GLI3) transcription factors. In addition to cartilage development, also acts as a regulator of proliferation and differentiation in epithelial stem/progenitor cells: involved in the lung epithelium during branching morphogenesis, by balancing proliferation and differentiation and regulating the extracellular matrix. Controls epithelial branching during kidney development.</text>
</comment>
<comment type="subunit">
    <text evidence="1 2">Homodimer; homodimerization is required for activity. Interacts (via C-terminus) with ZNF219; forming a complex that binds to the COL2A1 promoter and activates COL2A1 expression (By similarity). Interacts with DDRGK1. Interacts with EP300/p300 (By similarity). Interacts with beta-catenin (CTNNB1); inhibiting CTNNB1 activity by competing with the binding sites of TCF/LEF within CTNNB1 (By similarity).</text>
</comment>
<comment type="subcellular location">
    <subcellularLocation>
        <location evidence="2 3">Nucleus</location>
    </subcellularLocation>
</comment>
<comment type="domain">
    <text evidence="1">The transactivation domains TAM and TAC (for transactivation domain in the middle and at the C-terminus, respectively) are required to contact transcriptional coactivators and basal transcriptional machinery components and thereby induce gene transactivation.</text>
</comment>
<comment type="domain">
    <text evidence="1">The 9aaTAD motif is a transactivation domain present in a large number of yeast and animal transcription factors.</text>
</comment>
<comment type="domain">
    <text evidence="1">The PQA region (for proline, glutamine and alanine-rich) helps stabilize SOX9 and facilitates transactivation. It lacks intrinsic transactivation capability.</text>
</comment>
<comment type="PTM">
    <text evidence="2">Acetylated; acetylation impairs nuclear localization and ability to transactivate expression of target genes. Deacetylated by SIRT1.</text>
</comment>
<comment type="PTM">
    <text evidence="2">Phosphorylation at Ser-64 and Ser-211 by PKA increases transcriptional activity and may help delay chondrocyte maturation downstream of PTHLH/PTHrP signaling. Phosphorylation at either Ser-64 or Ser-211 is required for sumoylation, but phosphorylation is not dependent on sumoylation. Phosphorylated on tyrosine residues; tyrosine dephosphorylation by PTPN11/SHP2 blocks SOX9 phosphorylation by PKA and subsequent SUMOylation.</text>
</comment>
<comment type="PTM">
    <text evidence="2">Sumoylated; phosphorylation at either Ser-64 or Ser-211 is required for sumoylation. Sumoylation is induced by BMP signaling pathway.</text>
</comment>
<comment type="PTM">
    <text evidence="2">Ubiquitinated; ubiquitination leads to proteasomal degradation and is negatively regulated by DDRGK1.</text>
</comment>
<gene>
    <name type="primary">SOX9</name>
</gene>
<proteinExistence type="evidence at transcript level"/>
<dbReference type="EMBL" id="AY237827">
    <property type="protein sequence ID" value="AAP69840.1"/>
    <property type="molecule type" value="mRNA"/>
</dbReference>
<dbReference type="RefSeq" id="NP_001002978.1">
    <property type="nucleotide sequence ID" value="NM_001002978.1"/>
</dbReference>
<dbReference type="SMR" id="Q7YRJ7"/>
<dbReference type="FunCoup" id="Q7YRJ7">
    <property type="interactions" value="13"/>
</dbReference>
<dbReference type="PaxDb" id="9612-ENSCAFP00000006510"/>
<dbReference type="GeneID" id="403464"/>
<dbReference type="KEGG" id="cfa:403464"/>
<dbReference type="CTD" id="6662"/>
<dbReference type="eggNOG" id="KOG0527">
    <property type="taxonomic scope" value="Eukaryota"/>
</dbReference>
<dbReference type="InParanoid" id="Q7YRJ7"/>
<dbReference type="OrthoDB" id="6247875at2759"/>
<dbReference type="Proteomes" id="UP000002254">
    <property type="component" value="Unplaced"/>
</dbReference>
<dbReference type="Proteomes" id="UP000694429">
    <property type="component" value="Unplaced"/>
</dbReference>
<dbReference type="Proteomes" id="UP000694542">
    <property type="component" value="Unplaced"/>
</dbReference>
<dbReference type="Proteomes" id="UP000805418">
    <property type="component" value="Unplaced"/>
</dbReference>
<dbReference type="GO" id="GO:0005634">
    <property type="term" value="C:nucleus"/>
    <property type="evidence" value="ECO:0000250"/>
    <property type="project" value="UniProtKB"/>
</dbReference>
<dbReference type="GO" id="GO:0032991">
    <property type="term" value="C:protein-containing complex"/>
    <property type="evidence" value="ECO:0000250"/>
    <property type="project" value="UniProtKB"/>
</dbReference>
<dbReference type="GO" id="GO:0003682">
    <property type="term" value="F:chromatin binding"/>
    <property type="evidence" value="ECO:0000250"/>
    <property type="project" value="UniProtKB"/>
</dbReference>
<dbReference type="GO" id="GO:0000987">
    <property type="term" value="F:cis-regulatory region sequence-specific DNA binding"/>
    <property type="evidence" value="ECO:0000250"/>
    <property type="project" value="UniProtKB"/>
</dbReference>
<dbReference type="GO" id="GO:0003677">
    <property type="term" value="F:DNA binding"/>
    <property type="evidence" value="ECO:0000250"/>
    <property type="project" value="UniProtKB"/>
</dbReference>
<dbReference type="GO" id="GO:0001228">
    <property type="term" value="F:DNA-binding transcription activator activity, RNA polymerase II-specific"/>
    <property type="evidence" value="ECO:0000250"/>
    <property type="project" value="UniProtKB"/>
</dbReference>
<dbReference type="GO" id="GO:0000981">
    <property type="term" value="F:DNA-binding transcription factor activity, RNA polymerase II-specific"/>
    <property type="evidence" value="ECO:0000250"/>
    <property type="project" value="UniProtKB"/>
</dbReference>
<dbReference type="GO" id="GO:0000978">
    <property type="term" value="F:RNA polymerase II cis-regulatory region sequence-specific DNA binding"/>
    <property type="evidence" value="ECO:0000250"/>
    <property type="project" value="UniProtKB"/>
</dbReference>
<dbReference type="GO" id="GO:0043565">
    <property type="term" value="F:sequence-specific DNA binding"/>
    <property type="evidence" value="ECO:0000250"/>
    <property type="project" value="UniProtKB"/>
</dbReference>
<dbReference type="GO" id="GO:0001502">
    <property type="term" value="P:cartilage condensation"/>
    <property type="evidence" value="ECO:0000250"/>
    <property type="project" value="UniProtKB"/>
</dbReference>
<dbReference type="GO" id="GO:0051216">
    <property type="term" value="P:cartilage development"/>
    <property type="evidence" value="ECO:0000250"/>
    <property type="project" value="UniProtKB"/>
</dbReference>
<dbReference type="GO" id="GO:0001708">
    <property type="term" value="P:cell fate specification"/>
    <property type="evidence" value="ECO:0000250"/>
    <property type="project" value="UniProtKB"/>
</dbReference>
<dbReference type="GO" id="GO:0071773">
    <property type="term" value="P:cellular response to BMP stimulus"/>
    <property type="evidence" value="ECO:0000250"/>
    <property type="project" value="UniProtKB"/>
</dbReference>
<dbReference type="GO" id="GO:0071364">
    <property type="term" value="P:cellular response to epidermal growth factor stimulus"/>
    <property type="evidence" value="ECO:0000250"/>
    <property type="project" value="UniProtKB"/>
</dbReference>
<dbReference type="GO" id="GO:0071504">
    <property type="term" value="P:cellular response to heparin"/>
    <property type="evidence" value="ECO:0000250"/>
    <property type="project" value="UniProtKB"/>
</dbReference>
<dbReference type="GO" id="GO:0071260">
    <property type="term" value="P:cellular response to mechanical stimulus"/>
    <property type="evidence" value="ECO:0000250"/>
    <property type="project" value="UniProtKB"/>
</dbReference>
<dbReference type="GO" id="GO:0002062">
    <property type="term" value="P:chondrocyte differentiation"/>
    <property type="evidence" value="ECO:0000250"/>
    <property type="project" value="UniProtKB"/>
</dbReference>
<dbReference type="GO" id="GO:0003413">
    <property type="term" value="P:chondrocyte differentiation involved in endochondral bone morphogenesis"/>
    <property type="evidence" value="ECO:0000250"/>
    <property type="project" value="UniProtKB"/>
</dbReference>
<dbReference type="GO" id="GO:0003415">
    <property type="term" value="P:chondrocyte hypertrophy"/>
    <property type="evidence" value="ECO:0000250"/>
    <property type="project" value="UniProtKB"/>
</dbReference>
<dbReference type="GO" id="GO:0006338">
    <property type="term" value="P:chromatin remodeling"/>
    <property type="evidence" value="ECO:0000250"/>
    <property type="project" value="UniProtKB"/>
</dbReference>
<dbReference type="GO" id="GO:0090103">
    <property type="term" value="P:cochlea morphogenesis"/>
    <property type="evidence" value="ECO:0000250"/>
    <property type="project" value="UniProtKB"/>
</dbReference>
<dbReference type="GO" id="GO:0003203">
    <property type="term" value="P:endocardial cushion morphogenesis"/>
    <property type="evidence" value="ECO:0000250"/>
    <property type="project" value="UniProtKB"/>
</dbReference>
<dbReference type="GO" id="GO:0007173">
    <property type="term" value="P:epidermal growth factor receptor signaling pathway"/>
    <property type="evidence" value="ECO:0000250"/>
    <property type="project" value="UniProtKB"/>
</dbReference>
<dbReference type="GO" id="GO:0060517">
    <property type="term" value="P:epithelial cell proliferation involved in prostatic bud elongation"/>
    <property type="evidence" value="ECO:0000250"/>
    <property type="project" value="UniProtKB"/>
</dbReference>
<dbReference type="GO" id="GO:0001837">
    <property type="term" value="P:epithelial to mesenchymal transition"/>
    <property type="evidence" value="ECO:0000250"/>
    <property type="project" value="UniProtKB"/>
</dbReference>
<dbReference type="GO" id="GO:0070371">
    <property type="term" value="P:ERK1 and ERK2 cascade"/>
    <property type="evidence" value="ECO:0000250"/>
    <property type="project" value="UniProtKB"/>
</dbReference>
<dbReference type="GO" id="GO:0003430">
    <property type="term" value="P:growth plate cartilage chondrocyte growth"/>
    <property type="evidence" value="ECO:0000250"/>
    <property type="project" value="UniProtKB"/>
</dbReference>
<dbReference type="GO" id="GO:0001942">
    <property type="term" value="P:hair follicle development"/>
    <property type="evidence" value="ECO:0000250"/>
    <property type="project" value="UniProtKB"/>
</dbReference>
<dbReference type="GO" id="GO:0007507">
    <property type="term" value="P:heart development"/>
    <property type="evidence" value="ECO:0000318"/>
    <property type="project" value="GO_Central"/>
</dbReference>
<dbReference type="GO" id="GO:0003170">
    <property type="term" value="P:heart valve development"/>
    <property type="evidence" value="ECO:0000250"/>
    <property type="project" value="UniProtKB"/>
</dbReference>
<dbReference type="GO" id="GO:0003179">
    <property type="term" value="P:heart valve morphogenesis"/>
    <property type="evidence" value="ECO:0000250"/>
    <property type="project" value="UniProtKB"/>
</dbReference>
<dbReference type="GO" id="GO:0060729">
    <property type="term" value="P:intestinal epithelial structure maintenance"/>
    <property type="evidence" value="ECO:0000250"/>
    <property type="project" value="UniProtKB"/>
</dbReference>
<dbReference type="GO" id="GO:0019100">
    <property type="term" value="P:male germ-line sex determination"/>
    <property type="evidence" value="ECO:0000250"/>
    <property type="project" value="UniProtKB"/>
</dbReference>
<dbReference type="GO" id="GO:0072289">
    <property type="term" value="P:metanephric nephron tubule formation"/>
    <property type="evidence" value="ECO:0000250"/>
    <property type="project" value="UniProtKB"/>
</dbReference>
<dbReference type="GO" id="GO:0061138">
    <property type="term" value="P:morphogenesis of a branching epithelium"/>
    <property type="evidence" value="ECO:0000250"/>
    <property type="project" value="UniProtKB"/>
</dbReference>
<dbReference type="GO" id="GO:0002009">
    <property type="term" value="P:morphogenesis of an epithelium"/>
    <property type="evidence" value="ECO:0000318"/>
    <property type="project" value="GO_Central"/>
</dbReference>
<dbReference type="GO" id="GO:0043066">
    <property type="term" value="P:negative regulation of apoptotic process"/>
    <property type="evidence" value="ECO:0000250"/>
    <property type="project" value="UniProtKB"/>
</dbReference>
<dbReference type="GO" id="GO:0070168">
    <property type="term" value="P:negative regulation of biomineral tissue development"/>
    <property type="evidence" value="ECO:0000250"/>
    <property type="project" value="UniProtKB"/>
</dbReference>
<dbReference type="GO" id="GO:0090090">
    <property type="term" value="P:negative regulation of canonical Wnt signaling pathway"/>
    <property type="evidence" value="ECO:0000250"/>
    <property type="project" value="UniProtKB"/>
</dbReference>
<dbReference type="GO" id="GO:0032331">
    <property type="term" value="P:negative regulation of chondrocyte differentiation"/>
    <property type="evidence" value="ECO:0000250"/>
    <property type="project" value="UniProtKB"/>
</dbReference>
<dbReference type="GO" id="GO:0045892">
    <property type="term" value="P:negative regulation of DNA-templated transcription"/>
    <property type="evidence" value="ECO:0000250"/>
    <property type="project" value="UniProtKB"/>
</dbReference>
<dbReference type="GO" id="GO:0050680">
    <property type="term" value="P:negative regulation of epithelial cell proliferation"/>
    <property type="evidence" value="ECO:0000250"/>
    <property type="project" value="UniProtKB"/>
</dbReference>
<dbReference type="GO" id="GO:0046322">
    <property type="term" value="P:negative regulation of fatty acid oxidation"/>
    <property type="evidence" value="ECO:0000250"/>
    <property type="project" value="UniProtKB"/>
</dbReference>
<dbReference type="GO" id="GO:0002683">
    <property type="term" value="P:negative regulation of immune system process"/>
    <property type="evidence" value="ECO:0000250"/>
    <property type="project" value="UniProtKB"/>
</dbReference>
<dbReference type="GO" id="GO:0045662">
    <property type="term" value="P:negative regulation of myoblast differentiation"/>
    <property type="evidence" value="ECO:0000250"/>
    <property type="project" value="UniProtKB"/>
</dbReference>
<dbReference type="GO" id="GO:0030279">
    <property type="term" value="P:negative regulation of ossification"/>
    <property type="evidence" value="ECO:0000250"/>
    <property type="project" value="UniProtKB"/>
</dbReference>
<dbReference type="GO" id="GO:0045668">
    <property type="term" value="P:negative regulation of osteoblast differentiation"/>
    <property type="evidence" value="ECO:0000250"/>
    <property type="project" value="UniProtKB"/>
</dbReference>
<dbReference type="GO" id="GO:0046533">
    <property type="term" value="P:negative regulation of photoreceptor cell differentiation"/>
    <property type="evidence" value="ECO:0000250"/>
    <property type="project" value="UniProtKB"/>
</dbReference>
<dbReference type="GO" id="GO:0000122">
    <property type="term" value="P:negative regulation of transcription by RNA polymerase II"/>
    <property type="evidence" value="ECO:0000318"/>
    <property type="project" value="GO_Central"/>
</dbReference>
<dbReference type="GO" id="GO:0014036">
    <property type="term" value="P:neural crest cell fate specification"/>
    <property type="evidence" value="ECO:0000250"/>
    <property type="project" value="UniProtKB"/>
</dbReference>
<dbReference type="GO" id="GO:0006334">
    <property type="term" value="P:nucleosome assembly"/>
    <property type="evidence" value="ECO:0000250"/>
    <property type="project" value="UniProtKB"/>
</dbReference>
<dbReference type="GO" id="GO:0048709">
    <property type="term" value="P:oligodendrocyte differentiation"/>
    <property type="evidence" value="ECO:0000318"/>
    <property type="project" value="GO_Central"/>
</dbReference>
<dbReference type="GO" id="GO:0030916">
    <property type="term" value="P:otic vesicle formation"/>
    <property type="evidence" value="ECO:0000250"/>
    <property type="project" value="UniProtKB"/>
</dbReference>
<dbReference type="GO" id="GO:0090190">
    <property type="term" value="P:positive regulation of branching involved in ureteric bud morphogenesis"/>
    <property type="evidence" value="ECO:0000250"/>
    <property type="project" value="UniProtKB"/>
</dbReference>
<dbReference type="GO" id="GO:0008284">
    <property type="term" value="P:positive regulation of cell population proliferation"/>
    <property type="evidence" value="ECO:0000250"/>
    <property type="project" value="UniProtKB"/>
</dbReference>
<dbReference type="GO" id="GO:0032332">
    <property type="term" value="P:positive regulation of chondrocyte differentiation"/>
    <property type="evidence" value="ECO:0000250"/>
    <property type="project" value="UniProtKB"/>
</dbReference>
<dbReference type="GO" id="GO:0030858">
    <property type="term" value="P:positive regulation of epithelial cell differentiation"/>
    <property type="evidence" value="ECO:0000250"/>
    <property type="project" value="UniProtKB"/>
</dbReference>
<dbReference type="GO" id="GO:0010634">
    <property type="term" value="P:positive regulation of epithelial cell migration"/>
    <property type="evidence" value="ECO:0000250"/>
    <property type="project" value="UniProtKB"/>
</dbReference>
<dbReference type="GO" id="GO:0050679">
    <property type="term" value="P:positive regulation of epithelial cell proliferation"/>
    <property type="evidence" value="ECO:0000250"/>
    <property type="project" value="UniProtKB"/>
</dbReference>
<dbReference type="GO" id="GO:0010628">
    <property type="term" value="P:positive regulation of gene expression"/>
    <property type="evidence" value="ECO:0000250"/>
    <property type="project" value="UniProtKB"/>
</dbReference>
<dbReference type="GO" id="GO:0090184">
    <property type="term" value="P:positive regulation of kidney development"/>
    <property type="evidence" value="ECO:0000250"/>
    <property type="project" value="UniProtKB"/>
</dbReference>
<dbReference type="GO" id="GO:2000020">
    <property type="term" value="P:positive regulation of male gonad development"/>
    <property type="evidence" value="ECO:0000250"/>
    <property type="project" value="UniProtKB"/>
</dbReference>
<dbReference type="GO" id="GO:0002053">
    <property type="term" value="P:positive regulation of mesenchymal cell proliferation"/>
    <property type="evidence" value="ECO:0000250"/>
    <property type="project" value="UniProtKB"/>
</dbReference>
<dbReference type="GO" id="GO:2000741">
    <property type="term" value="P:positive regulation of mesenchymal stem cell differentiation"/>
    <property type="evidence" value="ECO:0000250"/>
    <property type="project" value="UniProtKB"/>
</dbReference>
<dbReference type="GO" id="GO:0045944">
    <property type="term" value="P:positive regulation of transcription by RNA polymerase II"/>
    <property type="evidence" value="ECO:0000250"/>
    <property type="project" value="UniProtKB"/>
</dbReference>
<dbReference type="GO" id="GO:0065003">
    <property type="term" value="P:protein-containing complex assembly"/>
    <property type="evidence" value="ECO:0000250"/>
    <property type="project" value="UniProtKB"/>
</dbReference>
<dbReference type="GO" id="GO:0042981">
    <property type="term" value="P:regulation of apoptotic process"/>
    <property type="evidence" value="ECO:0000250"/>
    <property type="project" value="UniProtKB"/>
</dbReference>
<dbReference type="GO" id="GO:0061035">
    <property type="term" value="P:regulation of cartilage development"/>
    <property type="evidence" value="ECO:0000250"/>
    <property type="project" value="UniProtKB"/>
</dbReference>
<dbReference type="GO" id="GO:0010564">
    <property type="term" value="P:regulation of cell cycle process"/>
    <property type="evidence" value="ECO:0000250"/>
    <property type="project" value="UniProtKB"/>
</dbReference>
<dbReference type="GO" id="GO:0042127">
    <property type="term" value="P:regulation of cell population proliferation"/>
    <property type="evidence" value="ECO:0000250"/>
    <property type="project" value="UniProtKB"/>
</dbReference>
<dbReference type="GO" id="GO:0060784">
    <property type="term" value="P:regulation of cell proliferation involved in tissue homeostasis"/>
    <property type="evidence" value="ECO:0000250"/>
    <property type="project" value="UniProtKB"/>
</dbReference>
<dbReference type="GO" id="GO:0072034">
    <property type="term" value="P:renal vesicle induction"/>
    <property type="evidence" value="ECO:0000250"/>
    <property type="project" value="UniProtKB"/>
</dbReference>
<dbReference type="GO" id="GO:0070542">
    <property type="term" value="P:response to fatty acid"/>
    <property type="evidence" value="ECO:0000250"/>
    <property type="project" value="UniProtKB"/>
</dbReference>
<dbReference type="GO" id="GO:0060041">
    <property type="term" value="P:retina development in camera-type eye"/>
    <property type="evidence" value="ECO:0000250"/>
    <property type="project" value="UniProtKB"/>
</dbReference>
<dbReference type="GO" id="GO:0060221">
    <property type="term" value="P:retinal rod cell differentiation"/>
    <property type="evidence" value="ECO:0000250"/>
    <property type="project" value="UniProtKB"/>
</dbReference>
<dbReference type="GO" id="GO:0060008">
    <property type="term" value="P:Sertoli cell differentiation"/>
    <property type="evidence" value="ECO:0000250"/>
    <property type="project" value="UniProtKB"/>
</dbReference>
<dbReference type="GO" id="GO:0007165">
    <property type="term" value="P:signal transduction"/>
    <property type="evidence" value="ECO:0000250"/>
    <property type="project" value="UniProtKB"/>
</dbReference>
<dbReference type="GO" id="GO:0001501">
    <property type="term" value="P:skeletal system development"/>
    <property type="evidence" value="ECO:0000250"/>
    <property type="project" value="UniProtKB"/>
</dbReference>
<dbReference type="GO" id="GO:0035019">
    <property type="term" value="P:somatic stem cell population maintenance"/>
    <property type="evidence" value="ECO:0000250"/>
    <property type="project" value="UniProtKB"/>
</dbReference>
<dbReference type="GO" id="GO:0007283">
    <property type="term" value="P:spermatogenesis"/>
    <property type="evidence" value="ECO:0000250"/>
    <property type="project" value="UniProtKB"/>
</dbReference>
<dbReference type="GO" id="GO:0001894">
    <property type="term" value="P:tissue homeostasis"/>
    <property type="evidence" value="ECO:0000250"/>
    <property type="project" value="UniProtKB"/>
</dbReference>
<dbReference type="CDD" id="cd22031">
    <property type="entry name" value="HMG-box_SoxE"/>
    <property type="match status" value="1"/>
</dbReference>
<dbReference type="FunFam" id="1.10.30.10:FF:000004">
    <property type="entry name" value="Transcription factor SOX-10"/>
    <property type="match status" value="1"/>
</dbReference>
<dbReference type="Gene3D" id="1.10.30.10">
    <property type="entry name" value="High mobility group box domain"/>
    <property type="match status" value="1"/>
</dbReference>
<dbReference type="InterPro" id="IPR009071">
    <property type="entry name" value="HMG_box_dom"/>
</dbReference>
<dbReference type="InterPro" id="IPR036910">
    <property type="entry name" value="HMG_box_dom_sf"/>
</dbReference>
<dbReference type="InterPro" id="IPR022151">
    <property type="entry name" value="Sox_N"/>
</dbReference>
<dbReference type="InterPro" id="IPR050917">
    <property type="entry name" value="SOX_TF"/>
</dbReference>
<dbReference type="PANTHER" id="PTHR45803">
    <property type="entry name" value="SOX100B"/>
    <property type="match status" value="1"/>
</dbReference>
<dbReference type="PANTHER" id="PTHR45803:SF1">
    <property type="entry name" value="TRANSCRIPTION FACTOR SOX-9"/>
    <property type="match status" value="1"/>
</dbReference>
<dbReference type="Pfam" id="PF00505">
    <property type="entry name" value="HMG_box"/>
    <property type="match status" value="1"/>
</dbReference>
<dbReference type="Pfam" id="PF12444">
    <property type="entry name" value="Sox_N"/>
    <property type="match status" value="1"/>
</dbReference>
<dbReference type="SMART" id="SM00398">
    <property type="entry name" value="HMG"/>
    <property type="match status" value="1"/>
</dbReference>
<dbReference type="SUPFAM" id="SSF47095">
    <property type="entry name" value="HMG-box"/>
    <property type="match status" value="1"/>
</dbReference>
<dbReference type="PROSITE" id="PS50118">
    <property type="entry name" value="HMG_BOX_2"/>
    <property type="match status" value="1"/>
</dbReference>
<feature type="chain" id="PRO_0000048738" description="Transcription factor SOX-9">
    <location>
        <begin position="1"/>
        <end position="513"/>
    </location>
</feature>
<feature type="DNA-binding region" description="HMG box" evidence="3">
    <location>
        <begin position="105"/>
        <end position="173"/>
    </location>
</feature>
<feature type="region of interest" description="Disordered" evidence="4">
    <location>
        <begin position="1"/>
        <end position="67"/>
    </location>
</feature>
<feature type="region of interest" description="Dimerization (DIM)" evidence="1">
    <location>
        <begin position="63"/>
        <end position="103"/>
    </location>
</feature>
<feature type="region of interest" description="PQA" evidence="1">
    <location>
        <begin position="63"/>
        <end position="103"/>
    </location>
</feature>
<feature type="region of interest" description="Disordered" evidence="4">
    <location>
        <begin position="160"/>
        <end position="273"/>
    </location>
</feature>
<feature type="region of interest" description="Transactivation domain (TAM)" evidence="1">
    <location>
        <begin position="224"/>
        <end position="307"/>
    </location>
</feature>
<feature type="region of interest" description="Disordered" evidence="4">
    <location>
        <begin position="334"/>
        <end position="447"/>
    </location>
</feature>
<feature type="region of interest" description="Transactivation domain (TAC)" evidence="1">
    <location>
        <begin position="398"/>
        <end position="513"/>
    </location>
</feature>
<feature type="region of interest" description="Disordered" evidence="4">
    <location>
        <begin position="483"/>
        <end position="513"/>
    </location>
</feature>
<feature type="short sequence motif" description="9aaTAD 1" evidence="1">
    <location>
        <begin position="275"/>
        <end position="284"/>
    </location>
</feature>
<feature type="short sequence motif" description="9aaTAD 2" evidence="1">
    <location>
        <begin position="290"/>
        <end position="298"/>
    </location>
</feature>
<feature type="short sequence motif" description="9aaTAD 3" evidence="1">
    <location>
        <begin position="464"/>
        <end position="472"/>
    </location>
</feature>
<feature type="compositionally biased region" description="Low complexity" evidence="4">
    <location>
        <begin position="30"/>
        <end position="41"/>
    </location>
</feature>
<feature type="compositionally biased region" description="Polar residues" evidence="4">
    <location>
        <begin position="42"/>
        <end position="52"/>
    </location>
</feature>
<feature type="compositionally biased region" description="Basic and acidic residues" evidence="4">
    <location>
        <begin position="56"/>
        <end position="67"/>
    </location>
</feature>
<feature type="compositionally biased region" description="Basic and acidic residues" evidence="4">
    <location>
        <begin position="160"/>
        <end position="174"/>
    </location>
</feature>
<feature type="compositionally biased region" description="Pro residues" evidence="4">
    <location>
        <begin position="341"/>
        <end position="380"/>
    </location>
</feature>
<feature type="compositionally biased region" description="Polar residues" evidence="4">
    <location>
        <begin position="387"/>
        <end position="423"/>
    </location>
</feature>
<feature type="compositionally biased region" description="Polar residues" evidence="4">
    <location>
        <begin position="489"/>
        <end position="513"/>
    </location>
</feature>
<feature type="modified residue" description="Phosphoserine" evidence="2">
    <location>
        <position position="64"/>
    </location>
</feature>
<feature type="modified residue" description="Phosphoserine" evidence="2">
    <location>
        <position position="211"/>
    </location>
</feature>
<feature type="cross-link" description="Glycyl lysine isopeptide (Lys-Gly) (interchain with G-Cter in ubiquitin)" evidence="2">
    <location>
        <position position="402"/>
    </location>
</feature>
<organism>
    <name type="scientific">Canis lupus familiaris</name>
    <name type="common">Dog</name>
    <name type="synonym">Canis familiaris</name>
    <dbReference type="NCBI Taxonomy" id="9615"/>
    <lineage>
        <taxon>Eukaryota</taxon>
        <taxon>Metazoa</taxon>
        <taxon>Chordata</taxon>
        <taxon>Craniata</taxon>
        <taxon>Vertebrata</taxon>
        <taxon>Euteleostomi</taxon>
        <taxon>Mammalia</taxon>
        <taxon>Eutheria</taxon>
        <taxon>Laurasiatheria</taxon>
        <taxon>Carnivora</taxon>
        <taxon>Caniformia</taxon>
        <taxon>Canidae</taxon>
        <taxon>Canis</taxon>
    </lineage>
</organism>